<dbReference type="EMBL" id="AE017355">
    <property type="protein sequence ID" value="AAT62578.1"/>
    <property type="molecule type" value="Genomic_DNA"/>
</dbReference>
<dbReference type="RefSeq" id="YP_039142.1">
    <property type="nucleotide sequence ID" value="NC_005957.1"/>
</dbReference>
<dbReference type="SMR" id="Q6HBD4"/>
<dbReference type="KEGG" id="btk:BT9727_4833"/>
<dbReference type="PATRIC" id="fig|281309.8.peg.5139"/>
<dbReference type="HOGENOM" id="CLU_059558_0_0_9"/>
<dbReference type="Proteomes" id="UP000001301">
    <property type="component" value="Chromosome"/>
</dbReference>
<dbReference type="GO" id="GO:0005524">
    <property type="term" value="F:ATP binding"/>
    <property type="evidence" value="ECO:0007669"/>
    <property type="project" value="UniProtKB-UniRule"/>
</dbReference>
<dbReference type="GO" id="GO:0005525">
    <property type="term" value="F:GTP binding"/>
    <property type="evidence" value="ECO:0007669"/>
    <property type="project" value="UniProtKB-UniRule"/>
</dbReference>
<dbReference type="Gene3D" id="3.40.50.300">
    <property type="entry name" value="P-loop containing nucleotide triphosphate hydrolases"/>
    <property type="match status" value="1"/>
</dbReference>
<dbReference type="HAMAP" id="MF_00636">
    <property type="entry name" value="RapZ_like"/>
    <property type="match status" value="1"/>
</dbReference>
<dbReference type="InterPro" id="IPR027417">
    <property type="entry name" value="P-loop_NTPase"/>
</dbReference>
<dbReference type="InterPro" id="IPR005337">
    <property type="entry name" value="RapZ-like"/>
</dbReference>
<dbReference type="InterPro" id="IPR053930">
    <property type="entry name" value="RapZ-like_N"/>
</dbReference>
<dbReference type="InterPro" id="IPR053931">
    <property type="entry name" value="RapZ_C"/>
</dbReference>
<dbReference type="NCBIfam" id="NF003828">
    <property type="entry name" value="PRK05416.1"/>
    <property type="match status" value="1"/>
</dbReference>
<dbReference type="PANTHER" id="PTHR30448">
    <property type="entry name" value="RNASE ADAPTER PROTEIN RAPZ"/>
    <property type="match status" value="1"/>
</dbReference>
<dbReference type="PANTHER" id="PTHR30448:SF0">
    <property type="entry name" value="RNASE ADAPTER PROTEIN RAPZ"/>
    <property type="match status" value="1"/>
</dbReference>
<dbReference type="Pfam" id="PF22740">
    <property type="entry name" value="PapZ_C"/>
    <property type="match status" value="1"/>
</dbReference>
<dbReference type="Pfam" id="PF03668">
    <property type="entry name" value="RapZ-like_N"/>
    <property type="match status" value="1"/>
</dbReference>
<dbReference type="PIRSF" id="PIRSF005052">
    <property type="entry name" value="P-loopkin"/>
    <property type="match status" value="1"/>
</dbReference>
<dbReference type="SUPFAM" id="SSF52540">
    <property type="entry name" value="P-loop containing nucleoside triphosphate hydrolases"/>
    <property type="match status" value="1"/>
</dbReference>
<proteinExistence type="inferred from homology"/>
<keyword id="KW-0067">ATP-binding</keyword>
<keyword id="KW-0342">GTP-binding</keyword>
<keyword id="KW-0547">Nucleotide-binding</keyword>
<organism>
    <name type="scientific">Bacillus thuringiensis subsp. konkukian (strain 97-27)</name>
    <dbReference type="NCBI Taxonomy" id="281309"/>
    <lineage>
        <taxon>Bacteria</taxon>
        <taxon>Bacillati</taxon>
        <taxon>Bacillota</taxon>
        <taxon>Bacilli</taxon>
        <taxon>Bacillales</taxon>
        <taxon>Bacillaceae</taxon>
        <taxon>Bacillus</taxon>
        <taxon>Bacillus cereus group</taxon>
    </lineage>
</organism>
<feature type="chain" id="PRO_0000107686" description="Nucleotide-binding protein BT9727_4833">
    <location>
        <begin position="1"/>
        <end position="293"/>
    </location>
</feature>
<feature type="binding site" evidence="1">
    <location>
        <begin position="14"/>
        <end position="21"/>
    </location>
    <ligand>
        <name>ATP</name>
        <dbReference type="ChEBI" id="CHEBI:30616"/>
    </ligand>
</feature>
<feature type="binding site" evidence="1">
    <location>
        <begin position="65"/>
        <end position="68"/>
    </location>
    <ligand>
        <name>GTP</name>
        <dbReference type="ChEBI" id="CHEBI:37565"/>
    </ligand>
</feature>
<comment type="function">
    <text evidence="1">Displays ATPase and GTPase activities.</text>
</comment>
<comment type="similarity">
    <text evidence="1">Belongs to the RapZ-like family.</text>
</comment>
<reference key="1">
    <citation type="journal article" date="2006" name="J. Bacteriol.">
        <title>Pathogenomic sequence analysis of Bacillus cereus and Bacillus thuringiensis isolates closely related to Bacillus anthracis.</title>
        <authorList>
            <person name="Han C.S."/>
            <person name="Xie G."/>
            <person name="Challacombe J.F."/>
            <person name="Altherr M.R."/>
            <person name="Bhotika S.S."/>
            <person name="Bruce D."/>
            <person name="Campbell C.S."/>
            <person name="Campbell M.L."/>
            <person name="Chen J."/>
            <person name="Chertkov O."/>
            <person name="Cleland C."/>
            <person name="Dimitrijevic M."/>
            <person name="Doggett N.A."/>
            <person name="Fawcett J.J."/>
            <person name="Glavina T."/>
            <person name="Goodwin L.A."/>
            <person name="Hill K.K."/>
            <person name="Hitchcock P."/>
            <person name="Jackson P.J."/>
            <person name="Keim P."/>
            <person name="Kewalramani A.R."/>
            <person name="Longmire J."/>
            <person name="Lucas S."/>
            <person name="Malfatti S."/>
            <person name="McMurry K."/>
            <person name="Meincke L.J."/>
            <person name="Misra M."/>
            <person name="Moseman B.L."/>
            <person name="Mundt M."/>
            <person name="Munk A.C."/>
            <person name="Okinaka R.T."/>
            <person name="Parson-Quintana B."/>
            <person name="Reilly L.P."/>
            <person name="Richardson P."/>
            <person name="Robinson D.L."/>
            <person name="Rubin E."/>
            <person name="Saunders E."/>
            <person name="Tapia R."/>
            <person name="Tesmer J.G."/>
            <person name="Thayer N."/>
            <person name="Thompson L.S."/>
            <person name="Tice H."/>
            <person name="Ticknor L.O."/>
            <person name="Wills P.L."/>
            <person name="Brettin T.S."/>
            <person name="Gilna P."/>
        </authorList>
    </citation>
    <scope>NUCLEOTIDE SEQUENCE [LARGE SCALE GENOMIC DNA]</scope>
    <source>
        <strain>97-27</strain>
    </source>
</reference>
<evidence type="ECO:0000255" key="1">
    <source>
        <dbReference type="HAMAP-Rule" id="MF_00636"/>
    </source>
</evidence>
<accession>Q6HBD4</accession>
<gene>
    <name type="ordered locus">BT9727_4833</name>
</gene>
<protein>
    <recommendedName>
        <fullName evidence="1">Nucleotide-binding protein BT9727_4833</fullName>
    </recommendedName>
</protein>
<name>Y4833_BACHK</name>
<sequence length="293" mass="33447">MTENNDIKMVIITGMSGAGKTVALQSFEDLGYFCVDNLPPMLLPKFIELMADSKGKMNKVALGVDLRGREFFEHLWGALDDLSERTWIIPHILFLDAKDSTLVTRYKETRRSHPLAPTGLPLKGIEIERSLLTDMKARANIVLDTSDLKPKELREKIVHLFSTETEQAFRVNVMSFGFKYGIPIDADLVFDVRFLPNPYYIPHMKPLTGLDEEVSSYVLKFNETHKFLEKLTDLITFMLPHYKREGKSQLVIAIGCTGGQHRSVTLTEYLGKHLKPEYSVHVSHRDVEKRKGH</sequence>